<keyword id="KW-0687">Ribonucleoprotein</keyword>
<keyword id="KW-0689">Ribosomal protein</keyword>
<evidence type="ECO:0000255" key="1">
    <source>
        <dbReference type="HAMAP-Rule" id="MF_00294"/>
    </source>
</evidence>
<evidence type="ECO:0000305" key="2"/>
<sequence length="57" mass="6733">MAKAKGNREKIKLVSTAKTGHFYTTEKNKRNMPEKMEIKKFDPVIRQHVIYKEAKIK</sequence>
<accession>Q0HE58</accession>
<proteinExistence type="inferred from homology"/>
<dbReference type="EMBL" id="CP000446">
    <property type="protein sequence ID" value="ABI40659.1"/>
    <property type="molecule type" value="Genomic_DNA"/>
</dbReference>
<dbReference type="RefSeq" id="WP_006079871.1">
    <property type="nucleotide sequence ID" value="NC_008321.1"/>
</dbReference>
<dbReference type="SMR" id="Q0HE58"/>
<dbReference type="GeneID" id="94729699"/>
<dbReference type="KEGG" id="she:Shewmr4_3595"/>
<dbReference type="HOGENOM" id="CLU_190949_1_1_6"/>
<dbReference type="GO" id="GO:0022625">
    <property type="term" value="C:cytosolic large ribosomal subunit"/>
    <property type="evidence" value="ECO:0007669"/>
    <property type="project" value="TreeGrafter"/>
</dbReference>
<dbReference type="GO" id="GO:0003735">
    <property type="term" value="F:structural constituent of ribosome"/>
    <property type="evidence" value="ECO:0007669"/>
    <property type="project" value="InterPro"/>
</dbReference>
<dbReference type="GO" id="GO:0006412">
    <property type="term" value="P:translation"/>
    <property type="evidence" value="ECO:0007669"/>
    <property type="project" value="UniProtKB-UniRule"/>
</dbReference>
<dbReference type="FunFam" id="2.20.28.120:FF:000001">
    <property type="entry name" value="50S ribosomal protein L33"/>
    <property type="match status" value="1"/>
</dbReference>
<dbReference type="Gene3D" id="2.20.28.120">
    <property type="entry name" value="Ribosomal protein L33"/>
    <property type="match status" value="1"/>
</dbReference>
<dbReference type="HAMAP" id="MF_00294">
    <property type="entry name" value="Ribosomal_bL33"/>
    <property type="match status" value="1"/>
</dbReference>
<dbReference type="InterPro" id="IPR001705">
    <property type="entry name" value="Ribosomal_bL33"/>
</dbReference>
<dbReference type="InterPro" id="IPR018264">
    <property type="entry name" value="Ribosomal_bL33_CS"/>
</dbReference>
<dbReference type="InterPro" id="IPR038584">
    <property type="entry name" value="Ribosomal_bL33_sf"/>
</dbReference>
<dbReference type="InterPro" id="IPR011332">
    <property type="entry name" value="Ribosomal_zn-bd"/>
</dbReference>
<dbReference type="NCBIfam" id="NF001860">
    <property type="entry name" value="PRK00595.1"/>
    <property type="match status" value="1"/>
</dbReference>
<dbReference type="NCBIfam" id="TIGR01023">
    <property type="entry name" value="rpmG_bact"/>
    <property type="match status" value="1"/>
</dbReference>
<dbReference type="PANTHER" id="PTHR15238">
    <property type="entry name" value="54S RIBOSOMAL PROTEIN L39, MITOCHONDRIAL"/>
    <property type="match status" value="1"/>
</dbReference>
<dbReference type="PANTHER" id="PTHR15238:SF1">
    <property type="entry name" value="LARGE RIBOSOMAL SUBUNIT PROTEIN BL33M"/>
    <property type="match status" value="1"/>
</dbReference>
<dbReference type="Pfam" id="PF00471">
    <property type="entry name" value="Ribosomal_L33"/>
    <property type="match status" value="1"/>
</dbReference>
<dbReference type="SUPFAM" id="SSF57829">
    <property type="entry name" value="Zn-binding ribosomal proteins"/>
    <property type="match status" value="1"/>
</dbReference>
<dbReference type="PROSITE" id="PS00582">
    <property type="entry name" value="RIBOSOMAL_L33"/>
    <property type="match status" value="1"/>
</dbReference>
<feature type="chain" id="PRO_0000356665" description="Large ribosomal subunit protein bL33">
    <location>
        <begin position="1"/>
        <end position="57"/>
    </location>
</feature>
<protein>
    <recommendedName>
        <fullName evidence="1">Large ribosomal subunit protein bL33</fullName>
    </recommendedName>
    <alternativeName>
        <fullName evidence="2">50S ribosomal protein L33</fullName>
    </alternativeName>
</protein>
<reference key="1">
    <citation type="submission" date="2006-08" db="EMBL/GenBank/DDBJ databases">
        <title>Complete sequence of Shewanella sp. MR-4.</title>
        <authorList>
            <consortium name="US DOE Joint Genome Institute"/>
            <person name="Copeland A."/>
            <person name="Lucas S."/>
            <person name="Lapidus A."/>
            <person name="Barry K."/>
            <person name="Detter J.C."/>
            <person name="Glavina del Rio T."/>
            <person name="Hammon N."/>
            <person name="Israni S."/>
            <person name="Dalin E."/>
            <person name="Tice H."/>
            <person name="Pitluck S."/>
            <person name="Kiss H."/>
            <person name="Brettin T."/>
            <person name="Bruce D."/>
            <person name="Han C."/>
            <person name="Tapia R."/>
            <person name="Gilna P."/>
            <person name="Schmutz J."/>
            <person name="Larimer F."/>
            <person name="Land M."/>
            <person name="Hauser L."/>
            <person name="Kyrpides N."/>
            <person name="Mikhailova N."/>
            <person name="Nealson K."/>
            <person name="Konstantinidis K."/>
            <person name="Klappenbach J."/>
            <person name="Tiedje J."/>
            <person name="Richardson P."/>
        </authorList>
    </citation>
    <scope>NUCLEOTIDE SEQUENCE [LARGE SCALE GENOMIC DNA]</scope>
    <source>
        <strain>MR-4</strain>
    </source>
</reference>
<gene>
    <name evidence="1" type="primary">rpmG</name>
    <name type="ordered locus">Shewmr4_3595</name>
</gene>
<organism>
    <name type="scientific">Shewanella sp. (strain MR-4)</name>
    <dbReference type="NCBI Taxonomy" id="60480"/>
    <lineage>
        <taxon>Bacteria</taxon>
        <taxon>Pseudomonadati</taxon>
        <taxon>Pseudomonadota</taxon>
        <taxon>Gammaproteobacteria</taxon>
        <taxon>Alteromonadales</taxon>
        <taxon>Shewanellaceae</taxon>
        <taxon>Shewanella</taxon>
    </lineage>
</organism>
<comment type="similarity">
    <text evidence="1">Belongs to the bacterial ribosomal protein bL33 family.</text>
</comment>
<name>RL33_SHESM</name>